<feature type="chain" id="PRO_1000120400" description="GMP synthase [glutamine-hydrolyzing]">
    <location>
        <begin position="1"/>
        <end position="525"/>
    </location>
</feature>
<feature type="domain" description="Glutamine amidotransferase type-1" evidence="1">
    <location>
        <begin position="8"/>
        <end position="207"/>
    </location>
</feature>
<feature type="domain" description="GMPS ATP-PPase" evidence="1">
    <location>
        <begin position="208"/>
        <end position="400"/>
    </location>
</feature>
<feature type="active site" description="Nucleophile" evidence="1">
    <location>
        <position position="85"/>
    </location>
</feature>
<feature type="active site" evidence="1">
    <location>
        <position position="181"/>
    </location>
</feature>
<feature type="active site" evidence="1">
    <location>
        <position position="183"/>
    </location>
</feature>
<feature type="binding site" evidence="1">
    <location>
        <begin position="235"/>
        <end position="241"/>
    </location>
    <ligand>
        <name>ATP</name>
        <dbReference type="ChEBI" id="CHEBI:30616"/>
    </ligand>
</feature>
<evidence type="ECO:0000255" key="1">
    <source>
        <dbReference type="HAMAP-Rule" id="MF_00344"/>
    </source>
</evidence>
<reference key="1">
    <citation type="submission" date="2007-11" db="EMBL/GenBank/DDBJ databases">
        <title>Complete sequence of chromosome of Shewanella baltica OS195.</title>
        <authorList>
            <consortium name="US DOE Joint Genome Institute"/>
            <person name="Copeland A."/>
            <person name="Lucas S."/>
            <person name="Lapidus A."/>
            <person name="Barry K."/>
            <person name="Glavina del Rio T."/>
            <person name="Dalin E."/>
            <person name="Tice H."/>
            <person name="Pitluck S."/>
            <person name="Chain P."/>
            <person name="Malfatti S."/>
            <person name="Shin M."/>
            <person name="Vergez L."/>
            <person name="Schmutz J."/>
            <person name="Larimer F."/>
            <person name="Land M."/>
            <person name="Hauser L."/>
            <person name="Kyrpides N."/>
            <person name="Kim E."/>
            <person name="Brettar I."/>
            <person name="Rodrigues J."/>
            <person name="Konstantinidis K."/>
            <person name="Klappenbach J."/>
            <person name="Hofle M."/>
            <person name="Tiedje J."/>
            <person name="Richardson P."/>
        </authorList>
    </citation>
    <scope>NUCLEOTIDE SEQUENCE [LARGE SCALE GENOMIC DNA]</scope>
    <source>
        <strain>OS195</strain>
    </source>
</reference>
<dbReference type="EC" id="6.3.5.2" evidence="1"/>
<dbReference type="EMBL" id="CP000891">
    <property type="protein sequence ID" value="ABX50303.1"/>
    <property type="molecule type" value="Genomic_DNA"/>
</dbReference>
<dbReference type="RefSeq" id="WP_006082475.1">
    <property type="nucleotide sequence ID" value="NC_009997.1"/>
</dbReference>
<dbReference type="SMR" id="A9KWW6"/>
<dbReference type="GeneID" id="11773198"/>
<dbReference type="KEGG" id="sbn:Sbal195_3141"/>
<dbReference type="HOGENOM" id="CLU_014340_0_5_6"/>
<dbReference type="UniPathway" id="UPA00189">
    <property type="reaction ID" value="UER00296"/>
</dbReference>
<dbReference type="Proteomes" id="UP000000770">
    <property type="component" value="Chromosome"/>
</dbReference>
<dbReference type="GO" id="GO:0005829">
    <property type="term" value="C:cytosol"/>
    <property type="evidence" value="ECO:0007669"/>
    <property type="project" value="TreeGrafter"/>
</dbReference>
<dbReference type="GO" id="GO:0005524">
    <property type="term" value="F:ATP binding"/>
    <property type="evidence" value="ECO:0007669"/>
    <property type="project" value="UniProtKB-UniRule"/>
</dbReference>
<dbReference type="GO" id="GO:0003921">
    <property type="term" value="F:GMP synthase activity"/>
    <property type="evidence" value="ECO:0007669"/>
    <property type="project" value="InterPro"/>
</dbReference>
<dbReference type="CDD" id="cd01742">
    <property type="entry name" value="GATase1_GMP_Synthase"/>
    <property type="match status" value="1"/>
</dbReference>
<dbReference type="CDD" id="cd01997">
    <property type="entry name" value="GMP_synthase_C"/>
    <property type="match status" value="1"/>
</dbReference>
<dbReference type="FunFam" id="3.30.300.10:FF:000002">
    <property type="entry name" value="GMP synthase [glutamine-hydrolyzing]"/>
    <property type="match status" value="1"/>
</dbReference>
<dbReference type="FunFam" id="3.40.50.620:FF:000001">
    <property type="entry name" value="GMP synthase [glutamine-hydrolyzing]"/>
    <property type="match status" value="1"/>
</dbReference>
<dbReference type="FunFam" id="3.40.50.880:FF:000001">
    <property type="entry name" value="GMP synthase [glutamine-hydrolyzing]"/>
    <property type="match status" value="1"/>
</dbReference>
<dbReference type="Gene3D" id="3.30.300.10">
    <property type="match status" value="1"/>
</dbReference>
<dbReference type="Gene3D" id="3.40.50.880">
    <property type="match status" value="1"/>
</dbReference>
<dbReference type="Gene3D" id="3.40.50.620">
    <property type="entry name" value="HUPs"/>
    <property type="match status" value="1"/>
</dbReference>
<dbReference type="HAMAP" id="MF_00344">
    <property type="entry name" value="GMP_synthase"/>
    <property type="match status" value="1"/>
</dbReference>
<dbReference type="InterPro" id="IPR029062">
    <property type="entry name" value="Class_I_gatase-like"/>
</dbReference>
<dbReference type="InterPro" id="IPR017926">
    <property type="entry name" value="GATASE"/>
</dbReference>
<dbReference type="InterPro" id="IPR001674">
    <property type="entry name" value="GMP_synth_C"/>
</dbReference>
<dbReference type="InterPro" id="IPR004739">
    <property type="entry name" value="GMP_synth_GATase"/>
</dbReference>
<dbReference type="InterPro" id="IPR022955">
    <property type="entry name" value="GMP_synthase"/>
</dbReference>
<dbReference type="InterPro" id="IPR025777">
    <property type="entry name" value="GMPS_ATP_PPase_dom"/>
</dbReference>
<dbReference type="InterPro" id="IPR022310">
    <property type="entry name" value="NAD/GMP_synthase"/>
</dbReference>
<dbReference type="InterPro" id="IPR014729">
    <property type="entry name" value="Rossmann-like_a/b/a_fold"/>
</dbReference>
<dbReference type="NCBIfam" id="TIGR00884">
    <property type="entry name" value="guaA_Cterm"/>
    <property type="match status" value="1"/>
</dbReference>
<dbReference type="NCBIfam" id="TIGR00888">
    <property type="entry name" value="guaA_Nterm"/>
    <property type="match status" value="1"/>
</dbReference>
<dbReference type="NCBIfam" id="NF000848">
    <property type="entry name" value="PRK00074.1"/>
    <property type="match status" value="1"/>
</dbReference>
<dbReference type="PANTHER" id="PTHR11922:SF2">
    <property type="entry name" value="GMP SYNTHASE [GLUTAMINE-HYDROLYZING]"/>
    <property type="match status" value="1"/>
</dbReference>
<dbReference type="PANTHER" id="PTHR11922">
    <property type="entry name" value="GMP SYNTHASE-RELATED"/>
    <property type="match status" value="1"/>
</dbReference>
<dbReference type="Pfam" id="PF00117">
    <property type="entry name" value="GATase"/>
    <property type="match status" value="1"/>
</dbReference>
<dbReference type="Pfam" id="PF00958">
    <property type="entry name" value="GMP_synt_C"/>
    <property type="match status" value="1"/>
</dbReference>
<dbReference type="Pfam" id="PF02540">
    <property type="entry name" value="NAD_synthase"/>
    <property type="match status" value="1"/>
</dbReference>
<dbReference type="PRINTS" id="PR00097">
    <property type="entry name" value="ANTSNTHASEII"/>
</dbReference>
<dbReference type="PRINTS" id="PR00099">
    <property type="entry name" value="CPSGATASE"/>
</dbReference>
<dbReference type="PRINTS" id="PR00096">
    <property type="entry name" value="GATASE"/>
</dbReference>
<dbReference type="SUPFAM" id="SSF52402">
    <property type="entry name" value="Adenine nucleotide alpha hydrolases-like"/>
    <property type="match status" value="1"/>
</dbReference>
<dbReference type="SUPFAM" id="SSF52317">
    <property type="entry name" value="Class I glutamine amidotransferase-like"/>
    <property type="match status" value="1"/>
</dbReference>
<dbReference type="SUPFAM" id="SSF54810">
    <property type="entry name" value="GMP synthetase C-terminal dimerisation domain"/>
    <property type="match status" value="1"/>
</dbReference>
<dbReference type="PROSITE" id="PS51273">
    <property type="entry name" value="GATASE_TYPE_1"/>
    <property type="match status" value="1"/>
</dbReference>
<dbReference type="PROSITE" id="PS51553">
    <property type="entry name" value="GMPS_ATP_PPASE"/>
    <property type="match status" value="1"/>
</dbReference>
<accession>A9KWW6</accession>
<name>GUAA_SHEB9</name>
<gene>
    <name evidence="1" type="primary">guaA</name>
    <name type="ordered locus">Sbal195_3141</name>
</gene>
<sequence>MSDIHEHKILILDFGSQYTQLIARRIREIGVYCELWAWDVTEAQIREFAPNGIILAGGPESVTAENSPRAPEYVFTAGVPVLGICYGMQTMSEQLGGKVIQGVGEGEFGYAQIEMLTDSLLFKGIEDAVNSEGKPLLDVWMSHGDKVSAIPEGFVAVAKTDTCPFAAMANEEKQFFGVQFHPEVTHTRQGMRMLSHFALDICGCAANWKPSSIIEDAIERLKKQIGDDEVILGLSGGVDSSVVAMLLHRAIGKKLTCVFVDNGLLRLNEAEQVMEMFGDHFGLNIIHVDAENRFLDAMKGEADPEAKRKIIGRVFVEIFDEESKKCANAKWLAQGTIYPDVIESAGSATGKAHVIKSHHNVGGLPDDMELGLVEPLRELFKDEVRKIGLELGLPYNMLYRHPFPGPGLGVRVLGEVKKEYCDLLRRADAIFIEELHKADLYNKVSQAFTVFLPVRSVGVMGDGRKYDWVVSLRAVETVDFMTAHWAHLPYDFLGRVSNRIINEVDGISRVVYDISGKPPATIEWE</sequence>
<proteinExistence type="inferred from homology"/>
<protein>
    <recommendedName>
        <fullName evidence="1">GMP synthase [glutamine-hydrolyzing]</fullName>
        <ecNumber evidence="1">6.3.5.2</ecNumber>
    </recommendedName>
    <alternativeName>
        <fullName evidence="1">GMP synthetase</fullName>
    </alternativeName>
    <alternativeName>
        <fullName evidence="1">Glutamine amidotransferase</fullName>
    </alternativeName>
</protein>
<comment type="function">
    <text evidence="1">Catalyzes the synthesis of GMP from XMP.</text>
</comment>
<comment type="catalytic activity">
    <reaction evidence="1">
        <text>XMP + L-glutamine + ATP + H2O = GMP + L-glutamate + AMP + diphosphate + 2 H(+)</text>
        <dbReference type="Rhea" id="RHEA:11680"/>
        <dbReference type="ChEBI" id="CHEBI:15377"/>
        <dbReference type="ChEBI" id="CHEBI:15378"/>
        <dbReference type="ChEBI" id="CHEBI:29985"/>
        <dbReference type="ChEBI" id="CHEBI:30616"/>
        <dbReference type="ChEBI" id="CHEBI:33019"/>
        <dbReference type="ChEBI" id="CHEBI:57464"/>
        <dbReference type="ChEBI" id="CHEBI:58115"/>
        <dbReference type="ChEBI" id="CHEBI:58359"/>
        <dbReference type="ChEBI" id="CHEBI:456215"/>
        <dbReference type="EC" id="6.3.5.2"/>
    </reaction>
</comment>
<comment type="pathway">
    <text evidence="1">Purine metabolism; GMP biosynthesis; GMP from XMP (L-Gln route): step 1/1.</text>
</comment>
<comment type="subunit">
    <text evidence="1">Homodimer.</text>
</comment>
<organism>
    <name type="scientific">Shewanella baltica (strain OS195)</name>
    <dbReference type="NCBI Taxonomy" id="399599"/>
    <lineage>
        <taxon>Bacteria</taxon>
        <taxon>Pseudomonadati</taxon>
        <taxon>Pseudomonadota</taxon>
        <taxon>Gammaproteobacteria</taxon>
        <taxon>Alteromonadales</taxon>
        <taxon>Shewanellaceae</taxon>
        <taxon>Shewanella</taxon>
    </lineage>
</organism>
<keyword id="KW-0067">ATP-binding</keyword>
<keyword id="KW-0315">Glutamine amidotransferase</keyword>
<keyword id="KW-0332">GMP biosynthesis</keyword>
<keyword id="KW-0436">Ligase</keyword>
<keyword id="KW-0547">Nucleotide-binding</keyword>
<keyword id="KW-0658">Purine biosynthesis</keyword>